<organism>
    <name type="scientific">Bacillus subtilis (strain 168)</name>
    <dbReference type="NCBI Taxonomy" id="224308"/>
    <lineage>
        <taxon>Bacteria</taxon>
        <taxon>Bacillati</taxon>
        <taxon>Bacillota</taxon>
        <taxon>Bacilli</taxon>
        <taxon>Bacillales</taxon>
        <taxon>Bacillaceae</taxon>
        <taxon>Bacillus</taxon>
    </lineage>
</organism>
<keyword id="KW-0309">Germination</keyword>
<keyword id="KW-1185">Reference proteome</keyword>
<keyword id="KW-0749">Sporulation</keyword>
<comment type="function">
    <text>Required for the formation of functionally normal spores. Could be involved in the establishment of normal spore coat structure and/or permeability, which allows the access of germinants to their receptor.</text>
</comment>
<comment type="developmental stage">
    <text>Expressed during sporulation, around the time of spore coat synthesis and assembly, in mother cell compartment.</text>
</comment>
<comment type="induction">
    <text>Expression is sigma K-dependent and negatively regulated by GerE.</text>
</comment>
<comment type="similarity">
    <text evidence="1">Belongs to the GerPA/GerPF family.</text>
</comment>
<comment type="sequence caution" evidence="1">
    <conflict type="erroneous initiation">
        <sequence resource="EMBL-CDS" id="CAA70674"/>
    </conflict>
    <text>Extended N-terminus.</text>
</comment>
<gene>
    <name type="primary">gerPF</name>
    <name type="synonym">yisC</name>
    <name type="ordered locus">BSU10670</name>
</gene>
<protein>
    <recommendedName>
        <fullName>Probable spore germination protein GerPF</fullName>
    </recommendedName>
</protein>
<accession>O06716</accession>
<evidence type="ECO:0000305" key="1"/>
<reference key="1">
    <citation type="journal article" date="1997" name="Microbiology">
        <title>Sequencing of regions downstream of addA (98 degrees) and citG (289 degrees) in Bacillus subtilis.</title>
        <authorList>
            <person name="Medina N."/>
            <person name="Vannier F."/>
            <person name="Roche B."/>
            <person name="Autret S."/>
            <person name="Levine A."/>
            <person name="Seror S.J."/>
        </authorList>
    </citation>
    <scope>NUCLEOTIDE SEQUENCE [GENOMIC DNA]</scope>
    <source>
        <strain>168</strain>
    </source>
</reference>
<reference key="2">
    <citation type="journal article" date="1997" name="Nature">
        <title>The complete genome sequence of the Gram-positive bacterium Bacillus subtilis.</title>
        <authorList>
            <person name="Kunst F."/>
            <person name="Ogasawara N."/>
            <person name="Moszer I."/>
            <person name="Albertini A.M."/>
            <person name="Alloni G."/>
            <person name="Azevedo V."/>
            <person name="Bertero M.G."/>
            <person name="Bessieres P."/>
            <person name="Bolotin A."/>
            <person name="Borchert S."/>
            <person name="Borriss R."/>
            <person name="Boursier L."/>
            <person name="Brans A."/>
            <person name="Braun M."/>
            <person name="Brignell S.C."/>
            <person name="Bron S."/>
            <person name="Brouillet S."/>
            <person name="Bruschi C.V."/>
            <person name="Caldwell B."/>
            <person name="Capuano V."/>
            <person name="Carter N.M."/>
            <person name="Choi S.-K."/>
            <person name="Codani J.-J."/>
            <person name="Connerton I.F."/>
            <person name="Cummings N.J."/>
            <person name="Daniel R.A."/>
            <person name="Denizot F."/>
            <person name="Devine K.M."/>
            <person name="Duesterhoeft A."/>
            <person name="Ehrlich S.D."/>
            <person name="Emmerson P.T."/>
            <person name="Entian K.-D."/>
            <person name="Errington J."/>
            <person name="Fabret C."/>
            <person name="Ferrari E."/>
            <person name="Foulger D."/>
            <person name="Fritz C."/>
            <person name="Fujita M."/>
            <person name="Fujita Y."/>
            <person name="Fuma S."/>
            <person name="Galizzi A."/>
            <person name="Galleron N."/>
            <person name="Ghim S.-Y."/>
            <person name="Glaser P."/>
            <person name="Goffeau A."/>
            <person name="Golightly E.J."/>
            <person name="Grandi G."/>
            <person name="Guiseppi G."/>
            <person name="Guy B.J."/>
            <person name="Haga K."/>
            <person name="Haiech J."/>
            <person name="Harwood C.R."/>
            <person name="Henaut A."/>
            <person name="Hilbert H."/>
            <person name="Holsappel S."/>
            <person name="Hosono S."/>
            <person name="Hullo M.-F."/>
            <person name="Itaya M."/>
            <person name="Jones L.-M."/>
            <person name="Joris B."/>
            <person name="Karamata D."/>
            <person name="Kasahara Y."/>
            <person name="Klaerr-Blanchard M."/>
            <person name="Klein C."/>
            <person name="Kobayashi Y."/>
            <person name="Koetter P."/>
            <person name="Koningstein G."/>
            <person name="Krogh S."/>
            <person name="Kumano M."/>
            <person name="Kurita K."/>
            <person name="Lapidus A."/>
            <person name="Lardinois S."/>
            <person name="Lauber J."/>
            <person name="Lazarevic V."/>
            <person name="Lee S.-M."/>
            <person name="Levine A."/>
            <person name="Liu H."/>
            <person name="Masuda S."/>
            <person name="Mauel C."/>
            <person name="Medigue C."/>
            <person name="Medina N."/>
            <person name="Mellado R.P."/>
            <person name="Mizuno M."/>
            <person name="Moestl D."/>
            <person name="Nakai S."/>
            <person name="Noback M."/>
            <person name="Noone D."/>
            <person name="O'Reilly M."/>
            <person name="Ogawa K."/>
            <person name="Ogiwara A."/>
            <person name="Oudega B."/>
            <person name="Park S.-H."/>
            <person name="Parro V."/>
            <person name="Pohl T.M."/>
            <person name="Portetelle D."/>
            <person name="Porwollik S."/>
            <person name="Prescott A.M."/>
            <person name="Presecan E."/>
            <person name="Pujic P."/>
            <person name="Purnelle B."/>
            <person name="Rapoport G."/>
            <person name="Rey M."/>
            <person name="Reynolds S."/>
            <person name="Rieger M."/>
            <person name="Rivolta C."/>
            <person name="Rocha E."/>
            <person name="Roche B."/>
            <person name="Rose M."/>
            <person name="Sadaie Y."/>
            <person name="Sato T."/>
            <person name="Scanlan E."/>
            <person name="Schleich S."/>
            <person name="Schroeter R."/>
            <person name="Scoffone F."/>
            <person name="Sekiguchi J."/>
            <person name="Sekowska A."/>
            <person name="Seror S.J."/>
            <person name="Serror P."/>
            <person name="Shin B.-S."/>
            <person name="Soldo B."/>
            <person name="Sorokin A."/>
            <person name="Tacconi E."/>
            <person name="Takagi T."/>
            <person name="Takahashi H."/>
            <person name="Takemaru K."/>
            <person name="Takeuchi M."/>
            <person name="Tamakoshi A."/>
            <person name="Tanaka T."/>
            <person name="Terpstra P."/>
            <person name="Tognoni A."/>
            <person name="Tosato V."/>
            <person name="Uchiyama S."/>
            <person name="Vandenbol M."/>
            <person name="Vannier F."/>
            <person name="Vassarotti A."/>
            <person name="Viari A."/>
            <person name="Wambutt R."/>
            <person name="Wedler E."/>
            <person name="Wedler H."/>
            <person name="Weitzenegger T."/>
            <person name="Winters P."/>
            <person name="Wipat A."/>
            <person name="Yamamoto H."/>
            <person name="Yamane K."/>
            <person name="Yasumoto K."/>
            <person name="Yata K."/>
            <person name="Yoshida K."/>
            <person name="Yoshikawa H.-F."/>
            <person name="Zumstein E."/>
            <person name="Yoshikawa H."/>
            <person name="Danchin A."/>
        </authorList>
    </citation>
    <scope>NUCLEOTIDE SEQUENCE [LARGE SCALE GENOMIC DNA]</scope>
    <source>
        <strain>168</strain>
    </source>
</reference>
<reference key="3">
    <citation type="journal article" date="2000" name="J. Bacteriol.">
        <title>Mutations in the gerP locus of Bacillus subtilis and Bacillus cereus affect access of germinants to their targets in spores.</title>
        <authorList>
            <person name="Behravan J."/>
            <person name="Chirakkal H."/>
            <person name="Masson A."/>
            <person name="Moir A."/>
        </authorList>
    </citation>
    <scope>CHARACTERIZATION</scope>
    <source>
        <strain>168 / 1604</strain>
    </source>
</reference>
<proteinExistence type="evidence at protein level"/>
<feature type="chain" id="PRO_0000105873" description="Probable spore germination protein GerPF">
    <location>
        <begin position="1"/>
        <end position="72"/>
    </location>
</feature>
<dbReference type="EMBL" id="Y09476">
    <property type="protein sequence ID" value="CAA70674.1"/>
    <property type="status" value="ALT_INIT"/>
    <property type="molecule type" value="Genomic_DNA"/>
</dbReference>
<dbReference type="EMBL" id="AL009126">
    <property type="protein sequence ID" value="CAB12907.2"/>
    <property type="molecule type" value="Genomic_DNA"/>
</dbReference>
<dbReference type="PIR" id="C69836">
    <property type="entry name" value="C69836"/>
</dbReference>
<dbReference type="RefSeq" id="NP_388948.2">
    <property type="nucleotide sequence ID" value="NC_000964.3"/>
</dbReference>
<dbReference type="RefSeq" id="WP_003233096.1">
    <property type="nucleotide sequence ID" value="NZ_OZ025638.1"/>
</dbReference>
<dbReference type="FunCoup" id="O06716">
    <property type="interactions" value="80"/>
</dbReference>
<dbReference type="STRING" id="224308.BSU10670"/>
<dbReference type="PaxDb" id="224308-BSU10670"/>
<dbReference type="EnsemblBacteria" id="CAB12907">
    <property type="protein sequence ID" value="CAB12907"/>
    <property type="gene ID" value="BSU_10670"/>
</dbReference>
<dbReference type="GeneID" id="939326"/>
<dbReference type="KEGG" id="bsu:BSU10670"/>
<dbReference type="PATRIC" id="fig|224308.179.peg.1147"/>
<dbReference type="eggNOG" id="ENOG503302E">
    <property type="taxonomic scope" value="Bacteria"/>
</dbReference>
<dbReference type="InParanoid" id="O06716"/>
<dbReference type="OrthoDB" id="2382149at2"/>
<dbReference type="BioCyc" id="BSUB:BSU10670-MONOMER"/>
<dbReference type="Proteomes" id="UP000001570">
    <property type="component" value="Chromosome"/>
</dbReference>
<dbReference type="GO" id="GO:0030435">
    <property type="term" value="P:sporulation resulting in formation of a cellular spore"/>
    <property type="evidence" value="ECO:0007669"/>
    <property type="project" value="UniProtKB-KW"/>
</dbReference>
<dbReference type="InterPro" id="IPR019618">
    <property type="entry name" value="Spore_germination_GerPA"/>
</dbReference>
<dbReference type="PANTHER" id="PTHR37808:SF1">
    <property type="entry name" value="SPORE GERMINATION PROTEIN-LIKE PROTEIN YDZR"/>
    <property type="match status" value="1"/>
</dbReference>
<dbReference type="PANTHER" id="PTHR37808">
    <property type="entry name" value="SPORE GERMINATION PROTEIN-LIKE PROTEIN YDZR-RELATED"/>
    <property type="match status" value="1"/>
</dbReference>
<dbReference type="Pfam" id="PF10676">
    <property type="entry name" value="gerPA"/>
    <property type="match status" value="1"/>
</dbReference>
<name>GERPF_BACSU</name>
<sequence length="72" mass="7248">MPAIVGPIAINSISGGVVNFGDSFYLSPKSSSKSALGSGAGNTGDFLLLNNAVNATNYIDPDVNDQDMVGNG</sequence>